<name>CALM_SACJA</name>
<gene>
    <name type="primary">cam</name>
</gene>
<keyword id="KW-0007">Acetylation</keyword>
<keyword id="KW-0106">Calcium</keyword>
<keyword id="KW-0479">Metal-binding</keyword>
<keyword id="KW-0488">Methylation</keyword>
<keyword id="KW-0677">Repeat</keyword>
<organism>
    <name type="scientific">Saccharina japonica</name>
    <name type="common">Sweet kelp</name>
    <name type="synonym">Laminaria japonica</name>
    <dbReference type="NCBI Taxonomy" id="88149"/>
    <lineage>
        <taxon>Eukaryota</taxon>
        <taxon>Sar</taxon>
        <taxon>Stramenopiles</taxon>
        <taxon>Ochrophyta</taxon>
        <taxon>PX clade</taxon>
        <taxon>Phaeophyceae</taxon>
        <taxon>Laminariales</taxon>
        <taxon>Laminariaceae</taxon>
        <taxon>Saccharina</taxon>
    </lineage>
</organism>
<proteinExistence type="evidence at transcript level"/>
<accession>A8CEP3</accession>
<protein>
    <recommendedName>
        <fullName>Calmodulin</fullName>
        <shortName>CaM</shortName>
    </recommendedName>
</protein>
<comment type="function">
    <text>Calmodulin mediates the control of a large number of enzymes, ion channels and other proteins by Ca(2+). Among the enzymes to be stimulated by the calmodulin-Ca(2+) complex are a number of protein kinases and phosphatases.</text>
</comment>
<comment type="miscellaneous">
    <text>This protein has four functional calcium-binding sites.</text>
</comment>
<comment type="similarity">
    <text evidence="3">Belongs to the calmodulin family.</text>
</comment>
<reference key="1">
    <citation type="submission" date="2007-03" db="EMBL/GenBank/DDBJ databases">
        <title>cDNA cloning of calmodulin from Laminaria japonica.</title>
        <authorList>
            <person name="Inoue A."/>
            <person name="Ojima T."/>
        </authorList>
    </citation>
    <scope>NUCLEOTIDE SEQUENCE [MRNA]</scope>
</reference>
<sequence length="149" mass="16768">MADQLTEEQIAEFKEAFSLFDKDGDGTITTKELGTVMRSLGQNPTEAELADMINEVDADGNGTIDFPEFLTMMARKMKDTDSEEEILEAFKVFDKDGNGFISAAELRHIMTNLGEKLTDEEVDEMIREADIDGDGQINYEEFVKMMMSK</sequence>
<feature type="initiator methionine" description="Removed" evidence="1">
    <location>
        <position position="1"/>
    </location>
</feature>
<feature type="chain" id="PRO_0000334498" description="Calmodulin">
    <location>
        <begin position="2"/>
        <end position="149"/>
    </location>
</feature>
<feature type="domain" description="EF-hand 1" evidence="2">
    <location>
        <begin position="8"/>
        <end position="43"/>
    </location>
</feature>
<feature type="domain" description="EF-hand 2" evidence="2">
    <location>
        <begin position="44"/>
        <end position="79"/>
    </location>
</feature>
<feature type="domain" description="EF-hand 3" evidence="2">
    <location>
        <begin position="81"/>
        <end position="116"/>
    </location>
</feature>
<feature type="domain" description="EF-hand 4" evidence="2">
    <location>
        <begin position="117"/>
        <end position="149"/>
    </location>
</feature>
<feature type="binding site" evidence="2">
    <location>
        <position position="21"/>
    </location>
    <ligand>
        <name>Ca(2+)</name>
        <dbReference type="ChEBI" id="CHEBI:29108"/>
        <label>1</label>
    </ligand>
</feature>
<feature type="binding site" evidence="2">
    <location>
        <position position="23"/>
    </location>
    <ligand>
        <name>Ca(2+)</name>
        <dbReference type="ChEBI" id="CHEBI:29108"/>
        <label>1</label>
    </ligand>
</feature>
<feature type="binding site" evidence="2">
    <location>
        <position position="25"/>
    </location>
    <ligand>
        <name>Ca(2+)</name>
        <dbReference type="ChEBI" id="CHEBI:29108"/>
        <label>1</label>
    </ligand>
</feature>
<feature type="binding site" evidence="2">
    <location>
        <position position="27"/>
    </location>
    <ligand>
        <name>Ca(2+)</name>
        <dbReference type="ChEBI" id="CHEBI:29108"/>
        <label>1</label>
    </ligand>
</feature>
<feature type="binding site" evidence="2">
    <location>
        <position position="32"/>
    </location>
    <ligand>
        <name>Ca(2+)</name>
        <dbReference type="ChEBI" id="CHEBI:29108"/>
        <label>1</label>
    </ligand>
</feature>
<feature type="binding site" evidence="2">
    <location>
        <position position="57"/>
    </location>
    <ligand>
        <name>Ca(2+)</name>
        <dbReference type="ChEBI" id="CHEBI:29108"/>
        <label>2</label>
    </ligand>
</feature>
<feature type="binding site" evidence="2">
    <location>
        <position position="59"/>
    </location>
    <ligand>
        <name>Ca(2+)</name>
        <dbReference type="ChEBI" id="CHEBI:29108"/>
        <label>2</label>
    </ligand>
</feature>
<feature type="binding site" evidence="2">
    <location>
        <position position="61"/>
    </location>
    <ligand>
        <name>Ca(2+)</name>
        <dbReference type="ChEBI" id="CHEBI:29108"/>
        <label>2</label>
    </ligand>
</feature>
<feature type="binding site" evidence="2">
    <location>
        <position position="63"/>
    </location>
    <ligand>
        <name>Ca(2+)</name>
        <dbReference type="ChEBI" id="CHEBI:29108"/>
        <label>2</label>
    </ligand>
</feature>
<feature type="binding site" evidence="2">
    <location>
        <position position="68"/>
    </location>
    <ligand>
        <name>Ca(2+)</name>
        <dbReference type="ChEBI" id="CHEBI:29108"/>
        <label>2</label>
    </ligand>
</feature>
<feature type="binding site" evidence="2">
    <location>
        <position position="94"/>
    </location>
    <ligand>
        <name>Ca(2+)</name>
        <dbReference type="ChEBI" id="CHEBI:29108"/>
        <label>3</label>
    </ligand>
</feature>
<feature type="binding site" evidence="2">
    <location>
        <position position="96"/>
    </location>
    <ligand>
        <name>Ca(2+)</name>
        <dbReference type="ChEBI" id="CHEBI:29108"/>
        <label>3</label>
    </ligand>
</feature>
<feature type="binding site" evidence="2">
    <location>
        <position position="98"/>
    </location>
    <ligand>
        <name>Ca(2+)</name>
        <dbReference type="ChEBI" id="CHEBI:29108"/>
        <label>3</label>
    </ligand>
</feature>
<feature type="binding site" evidence="2">
    <location>
        <position position="105"/>
    </location>
    <ligand>
        <name>Ca(2+)</name>
        <dbReference type="ChEBI" id="CHEBI:29108"/>
        <label>3</label>
    </ligand>
</feature>
<feature type="binding site" evidence="2">
    <location>
        <position position="130"/>
    </location>
    <ligand>
        <name>Ca(2+)</name>
        <dbReference type="ChEBI" id="CHEBI:29108"/>
        <label>4</label>
    </ligand>
</feature>
<feature type="binding site" evidence="2">
    <location>
        <position position="132"/>
    </location>
    <ligand>
        <name>Ca(2+)</name>
        <dbReference type="ChEBI" id="CHEBI:29108"/>
        <label>4</label>
    </ligand>
</feature>
<feature type="binding site" evidence="2">
    <location>
        <position position="134"/>
    </location>
    <ligand>
        <name>Ca(2+)</name>
        <dbReference type="ChEBI" id="CHEBI:29108"/>
        <label>4</label>
    </ligand>
</feature>
<feature type="binding site" evidence="2">
    <location>
        <position position="136"/>
    </location>
    <ligand>
        <name>Ca(2+)</name>
        <dbReference type="ChEBI" id="CHEBI:29108"/>
        <label>4</label>
    </ligand>
</feature>
<feature type="binding site" evidence="2">
    <location>
        <position position="141"/>
    </location>
    <ligand>
        <name>Ca(2+)</name>
        <dbReference type="ChEBI" id="CHEBI:29108"/>
        <label>4</label>
    </ligand>
</feature>
<feature type="modified residue" description="N-acetylalanine" evidence="1">
    <location>
        <position position="2"/>
    </location>
</feature>
<feature type="modified residue" description="N6,N6,N6-trimethyllysine" evidence="1">
    <location>
        <position position="116"/>
    </location>
</feature>
<evidence type="ECO:0000250" key="1"/>
<evidence type="ECO:0000255" key="2">
    <source>
        <dbReference type="PROSITE-ProRule" id="PRU00448"/>
    </source>
</evidence>
<evidence type="ECO:0000305" key="3"/>
<dbReference type="EMBL" id="AB299381">
    <property type="protein sequence ID" value="BAF80878.1"/>
    <property type="molecule type" value="mRNA"/>
</dbReference>
<dbReference type="SMR" id="A8CEP3"/>
<dbReference type="GO" id="GO:0016460">
    <property type="term" value="C:myosin II complex"/>
    <property type="evidence" value="ECO:0007669"/>
    <property type="project" value="TreeGrafter"/>
</dbReference>
<dbReference type="GO" id="GO:0005509">
    <property type="term" value="F:calcium ion binding"/>
    <property type="evidence" value="ECO:0007669"/>
    <property type="project" value="InterPro"/>
</dbReference>
<dbReference type="CDD" id="cd00051">
    <property type="entry name" value="EFh"/>
    <property type="match status" value="2"/>
</dbReference>
<dbReference type="FunFam" id="1.10.238.10:FF:000034">
    <property type="entry name" value="Calmodulin"/>
    <property type="match status" value="1"/>
</dbReference>
<dbReference type="FunFam" id="1.10.238.10:FF:000006">
    <property type="entry name" value="Calmodulin 1"/>
    <property type="match status" value="1"/>
</dbReference>
<dbReference type="Gene3D" id="1.10.238.10">
    <property type="entry name" value="EF-hand"/>
    <property type="match status" value="3"/>
</dbReference>
<dbReference type="InterPro" id="IPR050230">
    <property type="entry name" value="CALM/Myosin/TropC-like"/>
</dbReference>
<dbReference type="InterPro" id="IPR011992">
    <property type="entry name" value="EF-hand-dom_pair"/>
</dbReference>
<dbReference type="InterPro" id="IPR018247">
    <property type="entry name" value="EF_Hand_1_Ca_BS"/>
</dbReference>
<dbReference type="InterPro" id="IPR002048">
    <property type="entry name" value="EF_hand_dom"/>
</dbReference>
<dbReference type="PANTHER" id="PTHR23048:SF0">
    <property type="entry name" value="CALMODULIN LIKE 3"/>
    <property type="match status" value="1"/>
</dbReference>
<dbReference type="PANTHER" id="PTHR23048">
    <property type="entry name" value="MYOSIN LIGHT CHAIN 1, 3"/>
    <property type="match status" value="1"/>
</dbReference>
<dbReference type="Pfam" id="PF13499">
    <property type="entry name" value="EF-hand_7"/>
    <property type="match status" value="2"/>
</dbReference>
<dbReference type="PRINTS" id="PR00450">
    <property type="entry name" value="RECOVERIN"/>
</dbReference>
<dbReference type="SMART" id="SM00054">
    <property type="entry name" value="EFh"/>
    <property type="match status" value="4"/>
</dbReference>
<dbReference type="SMART" id="SM01184">
    <property type="entry name" value="efhand_Ca_insen"/>
    <property type="match status" value="1"/>
</dbReference>
<dbReference type="SUPFAM" id="SSF47473">
    <property type="entry name" value="EF-hand"/>
    <property type="match status" value="1"/>
</dbReference>
<dbReference type="PROSITE" id="PS00018">
    <property type="entry name" value="EF_HAND_1"/>
    <property type="match status" value="4"/>
</dbReference>
<dbReference type="PROSITE" id="PS50222">
    <property type="entry name" value="EF_HAND_2"/>
    <property type="match status" value="4"/>
</dbReference>